<keyword id="KW-0238">DNA-binding</keyword>
<keyword id="KW-1048">Host nucleus</keyword>
<keyword id="KW-1185">Reference proteome</keyword>
<keyword id="KW-0677">Repeat</keyword>
<name>VF401_IIV3</name>
<comment type="subcellular location">
    <subcellularLocation>
        <location evidence="2">Host nucleus</location>
    </subcellularLocation>
</comment>
<comment type="similarity">
    <text evidence="2">Belongs to the IIV-6 401R family.</text>
</comment>
<organism>
    <name type="scientific">Invertebrate iridescent virus 3</name>
    <name type="common">IIV-3</name>
    <name type="synonym">Mosquito iridescent virus</name>
    <dbReference type="NCBI Taxonomy" id="345201"/>
    <lineage>
        <taxon>Viruses</taxon>
        <taxon>Varidnaviria</taxon>
        <taxon>Bamfordvirae</taxon>
        <taxon>Nucleocytoviricota</taxon>
        <taxon>Megaviricetes</taxon>
        <taxon>Pimascovirales</taxon>
        <taxon>Iridoviridae</taxon>
        <taxon>Betairidovirinae</taxon>
        <taxon>Chloriridovirus</taxon>
    </lineage>
</organism>
<protein>
    <recommendedName>
        <fullName>High mobility group protein homolog 068R</fullName>
    </recommendedName>
</protein>
<accession>Q196Z2</accession>
<organismHost>
    <name type="scientific">Aedes vexans</name>
    <name type="common">Inland floodwater mosquito</name>
    <name type="synonym">Culex vexans</name>
    <dbReference type="NCBI Taxonomy" id="7163"/>
</organismHost>
<organismHost>
    <name type="scientific">Culex territans</name>
    <dbReference type="NCBI Taxonomy" id="42431"/>
</organismHost>
<organismHost>
    <name type="scientific">Culiseta annulata</name>
    <dbReference type="NCBI Taxonomy" id="332058"/>
</organismHost>
<organismHost>
    <name type="scientific">Ochlerotatus sollicitans</name>
    <name type="common">eastern saltmarsh mosquito</name>
    <dbReference type="NCBI Taxonomy" id="310513"/>
</organismHost>
<organismHost>
    <name type="scientific">Ochlerotatus taeniorhynchus</name>
    <name type="common">Black salt marsh mosquito</name>
    <name type="synonym">Aedes taeniorhynchus</name>
    <dbReference type="NCBI Taxonomy" id="329105"/>
</organismHost>
<organismHost>
    <name type="scientific">Psorophora ferox</name>
    <dbReference type="NCBI Taxonomy" id="7183"/>
</organismHost>
<gene>
    <name type="ORF">IIV3-068R</name>
</gene>
<feature type="chain" id="PRO_0000376914" description="High mobility group protein homolog 068R">
    <location>
        <begin position="1"/>
        <end position="201"/>
    </location>
</feature>
<feature type="DNA-binding region" description="HMG box 1" evidence="1">
    <location>
        <begin position="70"/>
        <end position="138"/>
    </location>
</feature>
<feature type="DNA-binding region" description="HMG box 2" evidence="1">
    <location>
        <begin position="143"/>
        <end position="201"/>
    </location>
</feature>
<proteinExistence type="inferred from homology"/>
<evidence type="ECO:0000255" key="1">
    <source>
        <dbReference type="PROSITE-ProRule" id="PRU00267"/>
    </source>
</evidence>
<evidence type="ECO:0000305" key="2"/>
<reference key="1">
    <citation type="journal article" date="2006" name="J. Virol.">
        <title>Genome of invertebrate iridescent virus type 3 (mosquito iridescent virus).</title>
        <authorList>
            <person name="Delhon G."/>
            <person name="Tulman E.R."/>
            <person name="Afonso C.L."/>
            <person name="Lu Z."/>
            <person name="Becnel J.J."/>
            <person name="Moser B.A."/>
            <person name="Kutish G.F."/>
            <person name="Rock D.L."/>
        </authorList>
    </citation>
    <scope>NUCLEOTIDE SEQUENCE [LARGE SCALE GENOMIC DNA]</scope>
</reference>
<sequence length="201" mass="23455">MAAKSKKILLQNLNSFVLDSILAIKDGEETPQSDASLVANLRKQWESSEFQKKMAVEVFGIKGKNLTPGPKRNKSAYMFFCQDMRQNIVADNPDCKPHQIMSLLGCKWRELTTKQKSQYYKQAADDKERYLDDKELEKRRNKTPSKLSSYFLFCEDERPIVKKEFPNMSTKKVTAECGKRWNEMKINDPKKYKYYVEKAAK</sequence>
<dbReference type="EMBL" id="DQ643392">
    <property type="protein sequence ID" value="ABF82098.1"/>
    <property type="molecule type" value="Genomic_DNA"/>
</dbReference>
<dbReference type="RefSeq" id="YP_654640.1">
    <property type="nucleotide sequence ID" value="NC_008187.1"/>
</dbReference>
<dbReference type="SMR" id="Q196Z2"/>
<dbReference type="KEGG" id="vg:4156279"/>
<dbReference type="OrthoDB" id="10798at10239"/>
<dbReference type="Proteomes" id="UP000001358">
    <property type="component" value="Genome"/>
</dbReference>
<dbReference type="GO" id="GO:0042025">
    <property type="term" value="C:host cell nucleus"/>
    <property type="evidence" value="ECO:0007669"/>
    <property type="project" value="UniProtKB-SubCell"/>
</dbReference>
<dbReference type="GO" id="GO:0003677">
    <property type="term" value="F:DNA binding"/>
    <property type="evidence" value="ECO:0007669"/>
    <property type="project" value="UniProtKB-KW"/>
</dbReference>
<dbReference type="CDD" id="cd00084">
    <property type="entry name" value="HMG-box_SF"/>
    <property type="match status" value="1"/>
</dbReference>
<dbReference type="Gene3D" id="1.10.30.10">
    <property type="entry name" value="High mobility group box domain"/>
    <property type="match status" value="2"/>
</dbReference>
<dbReference type="InterPro" id="IPR009071">
    <property type="entry name" value="HMG_box_dom"/>
</dbReference>
<dbReference type="InterPro" id="IPR036910">
    <property type="entry name" value="HMG_box_dom_sf"/>
</dbReference>
<dbReference type="InterPro" id="IPR050342">
    <property type="entry name" value="HMGB"/>
</dbReference>
<dbReference type="PANTHER" id="PTHR48112">
    <property type="entry name" value="HIGH MOBILITY GROUP PROTEIN DSP1"/>
    <property type="match status" value="1"/>
</dbReference>
<dbReference type="PANTHER" id="PTHR48112:SF22">
    <property type="entry name" value="MITOCHONDRIAL TRANSCRIPTION FACTOR A, ISOFORM B"/>
    <property type="match status" value="1"/>
</dbReference>
<dbReference type="Pfam" id="PF00505">
    <property type="entry name" value="HMG_box"/>
    <property type="match status" value="2"/>
</dbReference>
<dbReference type="SMART" id="SM00398">
    <property type="entry name" value="HMG"/>
    <property type="match status" value="2"/>
</dbReference>
<dbReference type="SUPFAM" id="SSF47095">
    <property type="entry name" value="HMG-box"/>
    <property type="match status" value="2"/>
</dbReference>
<dbReference type="PROSITE" id="PS50118">
    <property type="entry name" value="HMG_BOX_2"/>
    <property type="match status" value="2"/>
</dbReference>